<reference key="1">
    <citation type="journal article" date="2014" name="Nature">
        <title>The genome of the recently domesticated crop plant sugar beet (Beta vulgaris).</title>
        <authorList>
            <person name="Dohm J.C."/>
            <person name="Minoche A.E."/>
            <person name="Holtgraewe D."/>
            <person name="Capella-Gutierrez S."/>
            <person name="Zakrzewski F."/>
            <person name="Tafer H."/>
            <person name="Rupp O."/>
            <person name="Soerensen T.R."/>
            <person name="Stracke R."/>
            <person name="Reinhardt R."/>
            <person name="Goesmann A."/>
            <person name="Kraft T."/>
            <person name="Schulz B."/>
            <person name="Stadler P.F."/>
            <person name="Schmidt T."/>
            <person name="Gabaldon T."/>
            <person name="Lehrach H."/>
            <person name="Weisshaar B."/>
            <person name="Himmelbauer H."/>
        </authorList>
    </citation>
    <scope>NUCLEOTIDE SEQUENCE [LARGE SCALE GENOMIC DNA]</scope>
    <source>
        <strain>cv. Viroflay</strain>
        <tissue>Leaf</tissue>
    </source>
</reference>
<reference key="2">
    <citation type="journal article" date="2000" name="J. Biol. Chem.">
        <title>The plastid ribosomal proteins. Identification of all the proteins in the 50S subunit of an organelle ribosome (chloroplast).</title>
        <authorList>
            <person name="Yamaguchi K."/>
            <person name="Subramanian A.R."/>
        </authorList>
    </citation>
    <scope>PROTEIN SEQUENCE OF 37-60</scope>
    <scope>SUBUNIT</scope>
    <scope>SUBCELLULAR LOCATION</scope>
    <source>
        <strain>cv. Alwaro</strain>
        <tissue>Leaf</tissue>
    </source>
</reference>
<reference key="3">
    <citation type="journal article" date="2007" name="Proc. Natl. Acad. Sci. U.S.A.">
        <title>Cryo-EM study of the spinach chloroplast ribosome reveals the structural and functional roles of plastid-specific ribosomal proteins.</title>
        <authorList>
            <person name="Sharma M.R."/>
            <person name="Wilson D.N."/>
            <person name="Datta P.P."/>
            <person name="Barat C."/>
            <person name="Schluenzen F."/>
            <person name="Fucini P."/>
            <person name="Agrawal R.K."/>
        </authorList>
    </citation>
    <scope>STRUCTURE BY ELECTRON MICROSCOPY (9.4 ANGSTROMS)</scope>
</reference>
<reference key="4">
    <citation type="journal article" date="2016" name="Sci. Rep.">
        <title>Cryo-EM structure of the large subunit of the spinach chloroplast ribosome.</title>
        <authorList>
            <person name="Ahmed T."/>
            <person name="Yin Z."/>
            <person name="Bhushan S."/>
        </authorList>
    </citation>
    <scope>STRUCTURE BY ELECTRON MICROSCOPY (3.50 ANGSTROMS)</scope>
</reference>
<reference key="5">
    <citation type="journal article" date="2017" name="EMBO J.">
        <title>The complete structure of the chloroplast 70S ribosome in complex with translation factor pY.</title>
        <authorList>
            <person name="Bieri P."/>
            <person name="Leibundgut M."/>
            <person name="Saurer M."/>
            <person name="Boehringer D."/>
            <person name="Ban N."/>
        </authorList>
    </citation>
    <scope>STRUCTURE BY ELECTRON MICROSCOPY (3.25 ANGSTROMS)</scope>
    <scope>SUBUNIT</scope>
    <scope>SUBCELLULAR LOCATION</scope>
</reference>
<gene>
    <name type="primary">RPL31</name>
    <name type="ORF">SOVF_125040</name>
</gene>
<proteinExistence type="evidence at protein level"/>
<dbReference type="EMBL" id="KQ155161">
    <property type="protein sequence ID" value="KNA12538.1"/>
    <property type="molecule type" value="Genomic_DNA"/>
</dbReference>
<dbReference type="PDB" id="4V61">
    <property type="method" value="EM"/>
    <property type="resolution" value="9.40 A"/>
    <property type="chains" value="1=42-60"/>
</dbReference>
<dbReference type="PDB" id="5H1S">
    <property type="method" value="EM"/>
    <property type="resolution" value="3.50 A"/>
    <property type="chains" value="a=37-130"/>
</dbReference>
<dbReference type="PDB" id="5MMI">
    <property type="method" value="EM"/>
    <property type="resolution" value="3.25 A"/>
    <property type="chains" value="0=1-130"/>
</dbReference>
<dbReference type="PDB" id="5MMJ">
    <property type="method" value="EM"/>
    <property type="resolution" value="3.65 A"/>
    <property type="chains" value="0=1-130"/>
</dbReference>
<dbReference type="PDB" id="5MMM">
    <property type="method" value="EM"/>
    <property type="resolution" value="3.40 A"/>
    <property type="chains" value="0=1-130"/>
</dbReference>
<dbReference type="PDB" id="5X8P">
    <property type="method" value="EM"/>
    <property type="resolution" value="3.40 A"/>
    <property type="chains" value="0=37-130"/>
</dbReference>
<dbReference type="PDB" id="5X8T">
    <property type="method" value="EM"/>
    <property type="resolution" value="3.30 A"/>
    <property type="chains" value="0=37-130"/>
</dbReference>
<dbReference type="PDB" id="6ERI">
    <property type="method" value="EM"/>
    <property type="resolution" value="3.00 A"/>
    <property type="chains" value="AZ=37-102"/>
</dbReference>
<dbReference type="PDBsum" id="4V61"/>
<dbReference type="PDBsum" id="5H1S"/>
<dbReference type="PDBsum" id="5MMI"/>
<dbReference type="PDBsum" id="5MMJ"/>
<dbReference type="PDBsum" id="5MMM"/>
<dbReference type="PDBsum" id="5X8P"/>
<dbReference type="PDBsum" id="5X8T"/>
<dbReference type="PDBsum" id="6ERI"/>
<dbReference type="EMDB" id="EMD-3531"/>
<dbReference type="EMDB" id="EMD-3532"/>
<dbReference type="EMDB" id="EMD-3533"/>
<dbReference type="EMDB" id="EMD-3941"/>
<dbReference type="EMDB" id="EMD-6709"/>
<dbReference type="EMDB" id="EMD-6711"/>
<dbReference type="EMDB" id="EMD-9572"/>
<dbReference type="SMR" id="P82249"/>
<dbReference type="IntAct" id="P82249">
    <property type="interactions" value="1"/>
</dbReference>
<dbReference type="STRING" id="3562.P82249"/>
<dbReference type="OrthoDB" id="793at2759"/>
<dbReference type="Proteomes" id="UP001155700">
    <property type="component" value="Unplaced"/>
</dbReference>
<dbReference type="GO" id="GO:0009507">
    <property type="term" value="C:chloroplast"/>
    <property type="evidence" value="ECO:0007669"/>
    <property type="project" value="UniProtKB-SubCell"/>
</dbReference>
<dbReference type="GO" id="GO:1990904">
    <property type="term" value="C:ribonucleoprotein complex"/>
    <property type="evidence" value="ECO:0007669"/>
    <property type="project" value="UniProtKB-KW"/>
</dbReference>
<dbReference type="GO" id="GO:0005840">
    <property type="term" value="C:ribosome"/>
    <property type="evidence" value="ECO:0007669"/>
    <property type="project" value="UniProtKB-KW"/>
</dbReference>
<dbReference type="GO" id="GO:0019843">
    <property type="term" value="F:rRNA binding"/>
    <property type="evidence" value="ECO:0007669"/>
    <property type="project" value="UniProtKB-KW"/>
</dbReference>
<dbReference type="GO" id="GO:0003735">
    <property type="term" value="F:structural constituent of ribosome"/>
    <property type="evidence" value="ECO:0007669"/>
    <property type="project" value="InterPro"/>
</dbReference>
<dbReference type="GO" id="GO:0006412">
    <property type="term" value="P:translation"/>
    <property type="evidence" value="ECO:0007669"/>
    <property type="project" value="InterPro"/>
</dbReference>
<dbReference type="Gene3D" id="4.10.830.30">
    <property type="entry name" value="Ribosomal protein L31"/>
    <property type="match status" value="1"/>
</dbReference>
<dbReference type="InterPro" id="IPR034704">
    <property type="entry name" value="Ribosomal_bL28/bL31-like_sf"/>
</dbReference>
<dbReference type="InterPro" id="IPR002150">
    <property type="entry name" value="Ribosomal_bL31"/>
</dbReference>
<dbReference type="InterPro" id="IPR042105">
    <property type="entry name" value="Ribosomal_bL31_sf"/>
</dbReference>
<dbReference type="NCBIfam" id="TIGR00105">
    <property type="entry name" value="L31"/>
    <property type="match status" value="1"/>
</dbReference>
<dbReference type="PANTHER" id="PTHR33280">
    <property type="entry name" value="50S RIBOSOMAL PROTEIN L31, CHLOROPLASTIC"/>
    <property type="match status" value="1"/>
</dbReference>
<dbReference type="PANTHER" id="PTHR33280:SF1">
    <property type="entry name" value="LARGE RIBOSOMAL SUBUNIT PROTEIN BL31C"/>
    <property type="match status" value="1"/>
</dbReference>
<dbReference type="Pfam" id="PF01197">
    <property type="entry name" value="Ribosomal_L31"/>
    <property type="match status" value="1"/>
</dbReference>
<dbReference type="PRINTS" id="PR01249">
    <property type="entry name" value="RIBOSOMALL31"/>
</dbReference>
<dbReference type="SUPFAM" id="SSF143800">
    <property type="entry name" value="L28p-like"/>
    <property type="match status" value="1"/>
</dbReference>
<feature type="transit peptide" description="Chloroplast" evidence="1">
    <location>
        <begin position="1"/>
        <end position="36"/>
    </location>
</feature>
<feature type="chain" id="PRO_0000249410" description="Large ribosomal subunit protein bL31c">
    <location>
        <begin position="37"/>
        <end position="130"/>
    </location>
</feature>
<feature type="turn" evidence="8">
    <location>
        <begin position="39"/>
        <end position="41"/>
    </location>
</feature>
<feature type="strand" evidence="8">
    <location>
        <begin position="49"/>
        <end position="53"/>
    </location>
</feature>
<feature type="turn" evidence="8">
    <location>
        <begin position="54"/>
        <end position="56"/>
    </location>
</feature>
<feature type="strand" evidence="8">
    <location>
        <begin position="57"/>
        <end position="61"/>
    </location>
</feature>
<feature type="strand" evidence="8">
    <location>
        <begin position="63"/>
        <end position="72"/>
    </location>
</feature>
<feature type="strand" evidence="8">
    <location>
        <begin position="74"/>
        <end position="78"/>
    </location>
</feature>
<feature type="helix" evidence="9">
    <location>
        <begin position="82"/>
        <end position="85"/>
    </location>
</feature>
<feature type="strand" evidence="9">
    <location>
        <begin position="86"/>
        <end position="89"/>
    </location>
</feature>
<feature type="helix" evidence="9">
    <location>
        <begin position="95"/>
        <end position="98"/>
    </location>
</feature>
<accession>P82249</accession>
<accession>A0A0K9R0R6</accession>
<accession>P82246</accession>
<accession>P82247</accession>
<name>RK31_SPIOL</name>
<keyword id="KW-0002">3D-structure</keyword>
<keyword id="KW-0150">Chloroplast</keyword>
<keyword id="KW-0903">Direct protein sequencing</keyword>
<keyword id="KW-0934">Plastid</keyword>
<keyword id="KW-1185">Reference proteome</keyword>
<keyword id="KW-0687">Ribonucleoprotein</keyword>
<keyword id="KW-0689">Ribosomal protein</keyword>
<keyword id="KW-0694">RNA-binding</keyword>
<keyword id="KW-0699">rRNA-binding</keyword>
<keyword id="KW-0809">Transit peptide</keyword>
<comment type="function">
    <text evidence="6 7">Component of the chloroplast ribosome (chloro-ribosome), a dedicated translation machinery responsible for the synthesis of chloroplast genome-encoded proteins, including proteins of the transcription and translation machinery and components of the photosynthetic apparatus.</text>
</comment>
<comment type="subunit">
    <text evidence="1 2">Component of the chloroplast large ribosomal subunit (LSU). Mature 70S chloroplast ribosomes of higher plants consist of a small (30S) and a large (50S) subunit. The 30S small subunit contains 1 molecule of ribosomal RNA (16S rRNA) and 24 different proteins. The 50S large subunit contains 3 rRNA molecules (23S, 5S and 4.5S rRNA) and 33 different proteins.</text>
</comment>
<comment type="subcellular location">
    <subcellularLocation>
        <location evidence="1 2">Plastid</location>
        <location evidence="1 2">Chloroplast</location>
    </subcellularLocation>
</comment>
<comment type="miscellaneous">
    <text evidence="1">Three forms, which differ in pI, are produced, L31 alpha, L31 beta and L31 gamma.</text>
</comment>
<comment type="similarity">
    <text evidence="5">Belongs to the bacterial ribosomal protein bL31 family. Type A subfamily.</text>
</comment>
<sequence length="130" mass="14724">MVLTLSNQFLAKIPATPKTLTLPKTSSSTLRPQWSCRKSDIHPEFREDAKVYCNGELVMTTGGTQKDYTVEVWSGNHPFYLGNRSALLLDADQVEKFRKKYGELTQIMEIPVLKGEIILPPKKKSKAKKK</sequence>
<protein>
    <recommendedName>
        <fullName evidence="4">Large ribosomal subunit protein bL31c</fullName>
    </recommendedName>
    <alternativeName>
        <fullName evidence="3">50S ribosomal protein L31, chloroplastic</fullName>
    </alternativeName>
    <alternativeName>
        <fullName>CL31</fullName>
    </alternativeName>
</protein>
<evidence type="ECO:0000269" key="1">
    <source>
    </source>
</evidence>
<evidence type="ECO:0000269" key="2">
    <source>
    </source>
</evidence>
<evidence type="ECO:0000303" key="3">
    <source>
    </source>
</evidence>
<evidence type="ECO:0000303" key="4">
    <source>
    </source>
</evidence>
<evidence type="ECO:0000305" key="5"/>
<evidence type="ECO:0000305" key="6">
    <source>
    </source>
</evidence>
<evidence type="ECO:0000305" key="7">
    <source>
    </source>
</evidence>
<evidence type="ECO:0007829" key="8">
    <source>
        <dbReference type="PDB" id="5MMI"/>
    </source>
</evidence>
<evidence type="ECO:0007829" key="9">
    <source>
        <dbReference type="PDB" id="5X8T"/>
    </source>
</evidence>
<organism>
    <name type="scientific">Spinacia oleracea</name>
    <name type="common">Spinach</name>
    <dbReference type="NCBI Taxonomy" id="3562"/>
    <lineage>
        <taxon>Eukaryota</taxon>
        <taxon>Viridiplantae</taxon>
        <taxon>Streptophyta</taxon>
        <taxon>Embryophyta</taxon>
        <taxon>Tracheophyta</taxon>
        <taxon>Spermatophyta</taxon>
        <taxon>Magnoliopsida</taxon>
        <taxon>eudicotyledons</taxon>
        <taxon>Gunneridae</taxon>
        <taxon>Pentapetalae</taxon>
        <taxon>Caryophyllales</taxon>
        <taxon>Chenopodiaceae</taxon>
        <taxon>Chenopodioideae</taxon>
        <taxon>Anserineae</taxon>
        <taxon>Spinacia</taxon>
    </lineage>
</organism>